<proteinExistence type="inferred from homology"/>
<name>COMF_DICDI</name>
<protein>
    <recommendedName>
        <fullName>Communication mutant protein F</fullName>
    </recommendedName>
</protein>
<dbReference type="EMBL" id="AAFI02000011">
    <property type="protein sequence ID" value="EAL70525.1"/>
    <property type="molecule type" value="Genomic_DNA"/>
</dbReference>
<dbReference type="EMBL" id="AAFI02000009">
    <property type="protein sequence ID" value="EAL70846.1"/>
    <property type="molecule type" value="Genomic_DNA"/>
</dbReference>
<dbReference type="EMBL" id="AY221643">
    <property type="protein sequence ID" value="AAO34399.1"/>
    <property type="molecule type" value="Genomic_DNA"/>
</dbReference>
<dbReference type="RefSeq" id="XP_644451.1">
    <property type="nucleotide sequence ID" value="XM_639359.1"/>
</dbReference>
<dbReference type="RefSeq" id="XP_644799.1">
    <property type="nucleotide sequence ID" value="XM_639707.1"/>
</dbReference>
<dbReference type="SMR" id="Q557B8"/>
<dbReference type="GlyCosmos" id="Q557B8">
    <property type="glycosylation" value="7 sites, No reported glycans"/>
</dbReference>
<dbReference type="GlyGen" id="Q557B8">
    <property type="glycosylation" value="8 sites"/>
</dbReference>
<dbReference type="PaxDb" id="44689-DDB0214838"/>
<dbReference type="EnsemblProtists" id="EAL70525">
    <property type="protein sequence ID" value="EAL70525"/>
    <property type="gene ID" value="DDB_G0273669"/>
</dbReference>
<dbReference type="EnsemblProtists" id="EAL70846">
    <property type="protein sequence ID" value="EAL70846"/>
    <property type="gene ID" value="DDB_G0273257"/>
</dbReference>
<dbReference type="GeneID" id="8618901"/>
<dbReference type="GeneID" id="8619076"/>
<dbReference type="KEGG" id="ddi:DDB_G0273257"/>
<dbReference type="KEGG" id="ddi:DDB_G0273669"/>
<dbReference type="dictyBase" id="DDB_G0273257">
    <property type="gene designation" value="comF-1"/>
</dbReference>
<dbReference type="dictyBase" id="DDB_G0273669">
    <property type="gene designation" value="comF-2"/>
</dbReference>
<dbReference type="VEuPathDB" id="AmoebaDB:DDB_G0273669"/>
<dbReference type="HOGENOM" id="CLU_005143_0_0_1"/>
<dbReference type="InParanoid" id="Q557B8"/>
<dbReference type="OMA" id="IHANCAG"/>
<dbReference type="PhylomeDB" id="Q557B8"/>
<dbReference type="PRO" id="PR:Q557B8"/>
<dbReference type="Proteomes" id="UP000002195">
    <property type="component" value="Chromosome 2"/>
</dbReference>
<dbReference type="GO" id="GO:0005576">
    <property type="term" value="C:extracellular region"/>
    <property type="evidence" value="ECO:0007669"/>
    <property type="project" value="UniProtKB-SubCell"/>
</dbReference>
<dbReference type="GO" id="GO:0031152">
    <property type="term" value="P:aggregation involved in sorocarp development"/>
    <property type="evidence" value="ECO:0000315"/>
    <property type="project" value="dictyBase"/>
</dbReference>
<dbReference type="InterPro" id="IPR055401">
    <property type="entry name" value="CEMIP_beta-hel_dom"/>
</dbReference>
<dbReference type="InterPro" id="IPR019316">
    <property type="entry name" value="G8_domain"/>
</dbReference>
<dbReference type="InterPro" id="IPR052334">
    <property type="entry name" value="G8_domain-comF-like"/>
</dbReference>
<dbReference type="PANTHER" id="PTHR47687:SF6">
    <property type="entry name" value="COMMUNICATION MUTANT PROTEIN F-RELATED"/>
    <property type="match status" value="1"/>
</dbReference>
<dbReference type="PANTHER" id="PTHR47687">
    <property type="entry name" value="G8 DOMAIN-CONTAINING PROTEIN DDB_G0288475-RELATED"/>
    <property type="match status" value="1"/>
</dbReference>
<dbReference type="Pfam" id="PF24606">
    <property type="entry name" value="CEMIP_beta-hel"/>
    <property type="match status" value="1"/>
</dbReference>
<dbReference type="Pfam" id="PF10162">
    <property type="entry name" value="G8"/>
    <property type="match status" value="1"/>
</dbReference>
<dbReference type="SMART" id="SM01225">
    <property type="entry name" value="G8"/>
    <property type="match status" value="1"/>
</dbReference>
<dbReference type="PROSITE" id="PS51484">
    <property type="entry name" value="G8"/>
    <property type="match status" value="1"/>
</dbReference>
<comment type="subcellular location">
    <subcellularLocation>
        <location evidence="4">Secreted</location>
    </subcellularLocation>
</comment>
<comment type="disruption phenotype">
    <text evidence="3">Shows no aggregation.</text>
</comment>
<comment type="similarity">
    <text evidence="4">Belongs to the comF family.</text>
</comment>
<comment type="caution">
    <text evidence="4">The gene for this protein is duplicated in strains AX3 and AX4. These strains contain a duplication of a segment of 750 kb of chromosome 2 compared to the corresponding sequence in strain AX2.</text>
</comment>
<organism>
    <name type="scientific">Dictyostelium discoideum</name>
    <name type="common">Social amoeba</name>
    <dbReference type="NCBI Taxonomy" id="44689"/>
    <lineage>
        <taxon>Eukaryota</taxon>
        <taxon>Amoebozoa</taxon>
        <taxon>Evosea</taxon>
        <taxon>Eumycetozoa</taxon>
        <taxon>Dictyostelia</taxon>
        <taxon>Dictyosteliales</taxon>
        <taxon>Dictyosteliaceae</taxon>
        <taxon>Dictyostelium</taxon>
    </lineage>
</organism>
<sequence>MKIYKKNHFLKILIIFIYLSCNILKVNADGTFSTIQPSTDIKFDKSNLEFVAEWDVSANSISNVVGSTDSSEFSLNYGVWGPTYNYLIAKNKSPSIKANVDYTFSFDFKLGKALGEYNNYQSMVLSFYIPEDIAYFPWEIRTPLYTTNEFSGNFASTSYQSKILTFRSTVDIGNSIMVLRINRATETGPTASSVYFRNMKITIPSKPITTPTDLLTKDSELIVIPKPPISLDLQDLTKCPYLTASDLYNWHDPTIWPNGVVPSPNQNITIPAGKRVLISASSISQTQIYSRIVVPVNSELIFNDQNFTMNIRDIYVQGKFIMGTSLCRYNSFINIIFHGEKTLQDTIAQFYGSKGIAVASGGFISVQGKQYHNTWSKLASNVWSGDRVIWIQDNVNWEVGQQVLITTSVYKDELDNQNEILTIKAIEGKKIEFTEPIKWFKYGSQEYQSEVALLSRRIVFSSDESSSVSTSFGGHILSSGEMQFAGVQLKRMGQKNVKARYPLHYHLGGTLNNSFISDCSVTNSYYRCYTIHGTNNVTLTRNVAYDAFGHCYYLEDGVEVDNRISFNLGAYVHTIGKPAAGASQIGETFYQSSELTQPADSAASCFYITNSWNSFIGNAASGGWAGFAFPNLPKPIGNHRTLNIIPMQYPIKEWQGNTAHSSGYYFEDGASIYVGGNLTFNEANGMLIYNSGRLGRTTYVNGVKNENNVVFDRLNNTKIFLSNLGVGYWGENIEIVGYESHDNTRPVSLFGNVWLHNALVNGQSGNILTKNSETTRQGFRFYDFYVQTIISNTIFRNFIHSTAATKRDEDNVVITATTFSDVFKPQFISATKNITFQNVPQSQIIGHEDVANSGSSRLFNFLDGDGSVTSSFTGKPGIPQIVGSHVSWWKFDDSCLFSTEWNVWVCNKGTKGLANIEFWVPGFMERELEQDPDSYIGSISLFGSGINDERKTLLTRNPGITGVSNMGWYAYFTIGTPNYLRIWTAQIAFGEYIFLAIPYPTGTTFTITSEYDYSNQYTYTITKTTSALAVKQGNGKQYYFDGTHLFLKLVNFMNTGGSWESFDRVGIKIPDVYWTYIYNIRATNTAKPSVNGYFLNLPDVRPSSTL</sequence>
<accession>Q557B8</accession>
<accession>Q86MX4</accession>
<evidence type="ECO:0000255" key="1"/>
<evidence type="ECO:0000255" key="2">
    <source>
        <dbReference type="PROSITE-ProRule" id="PRU00817"/>
    </source>
</evidence>
<evidence type="ECO:0000269" key="3">
    <source>
    </source>
</evidence>
<evidence type="ECO:0000305" key="4"/>
<reference key="1">
    <citation type="journal article" date="2002" name="Nature">
        <title>Sequence and analysis of chromosome 2 of Dictyostelium discoideum.</title>
        <authorList>
            <person name="Gloeckner G."/>
            <person name="Eichinger L."/>
            <person name="Szafranski K."/>
            <person name="Pachebat J.A."/>
            <person name="Bankier A.T."/>
            <person name="Dear P.H."/>
            <person name="Lehmann R."/>
            <person name="Baumgart C."/>
            <person name="Parra G."/>
            <person name="Abril J.F."/>
            <person name="Guigo R."/>
            <person name="Kumpf K."/>
            <person name="Tunggal B."/>
            <person name="Cox E.C."/>
            <person name="Quail M.A."/>
            <person name="Platzer M."/>
            <person name="Rosenthal A."/>
            <person name="Noegel A.A."/>
        </authorList>
    </citation>
    <scope>NUCLEOTIDE SEQUENCE [LARGE SCALE GENOMIC DNA]</scope>
    <source>
        <strain>AX4</strain>
    </source>
</reference>
<reference key="2">
    <citation type="journal article" date="2005" name="Nature">
        <title>The genome of the social amoeba Dictyostelium discoideum.</title>
        <authorList>
            <person name="Eichinger L."/>
            <person name="Pachebat J.A."/>
            <person name="Gloeckner G."/>
            <person name="Rajandream M.A."/>
            <person name="Sucgang R."/>
            <person name="Berriman M."/>
            <person name="Song J."/>
            <person name="Olsen R."/>
            <person name="Szafranski K."/>
            <person name="Xu Q."/>
            <person name="Tunggal B."/>
            <person name="Kummerfeld S."/>
            <person name="Madera M."/>
            <person name="Konfortov B.A."/>
            <person name="Rivero F."/>
            <person name="Bankier A.T."/>
            <person name="Lehmann R."/>
            <person name="Hamlin N."/>
            <person name="Davies R."/>
            <person name="Gaudet P."/>
            <person name="Fey P."/>
            <person name="Pilcher K."/>
            <person name="Chen G."/>
            <person name="Saunders D."/>
            <person name="Sodergren E.J."/>
            <person name="Davis P."/>
            <person name="Kerhornou A."/>
            <person name="Nie X."/>
            <person name="Hall N."/>
            <person name="Anjard C."/>
            <person name="Hemphill L."/>
            <person name="Bason N."/>
            <person name="Farbrother P."/>
            <person name="Desany B."/>
            <person name="Just E."/>
            <person name="Morio T."/>
            <person name="Rost R."/>
            <person name="Churcher C.M."/>
            <person name="Cooper J."/>
            <person name="Haydock S."/>
            <person name="van Driessche N."/>
            <person name="Cronin A."/>
            <person name="Goodhead I."/>
            <person name="Muzny D.M."/>
            <person name="Mourier T."/>
            <person name="Pain A."/>
            <person name="Lu M."/>
            <person name="Harper D."/>
            <person name="Lindsay R."/>
            <person name="Hauser H."/>
            <person name="James K.D."/>
            <person name="Quiles M."/>
            <person name="Madan Babu M."/>
            <person name="Saito T."/>
            <person name="Buchrieser C."/>
            <person name="Wardroper A."/>
            <person name="Felder M."/>
            <person name="Thangavelu M."/>
            <person name="Johnson D."/>
            <person name="Knights A."/>
            <person name="Loulseged H."/>
            <person name="Mungall K.L."/>
            <person name="Oliver K."/>
            <person name="Price C."/>
            <person name="Quail M.A."/>
            <person name="Urushihara H."/>
            <person name="Hernandez J."/>
            <person name="Rabbinowitsch E."/>
            <person name="Steffen D."/>
            <person name="Sanders M."/>
            <person name="Ma J."/>
            <person name="Kohara Y."/>
            <person name="Sharp S."/>
            <person name="Simmonds M.N."/>
            <person name="Spiegler S."/>
            <person name="Tivey A."/>
            <person name="Sugano S."/>
            <person name="White B."/>
            <person name="Walker D."/>
            <person name="Woodward J.R."/>
            <person name="Winckler T."/>
            <person name="Tanaka Y."/>
            <person name="Shaulsky G."/>
            <person name="Schleicher M."/>
            <person name="Weinstock G.M."/>
            <person name="Rosenthal A."/>
            <person name="Cox E.C."/>
            <person name="Chisholm R.L."/>
            <person name="Gibbs R.A."/>
            <person name="Loomis W.F."/>
            <person name="Platzer M."/>
            <person name="Kay R.R."/>
            <person name="Williams J.G."/>
            <person name="Dear P.H."/>
            <person name="Noegel A.A."/>
            <person name="Barrell B.G."/>
            <person name="Kuspa A."/>
        </authorList>
    </citation>
    <scope>NUCLEOTIDE SEQUENCE [LARGE SCALE GENOMIC DNA]</scope>
    <source>
        <strain>AX4</strain>
    </source>
</reference>
<reference key="3">
    <citation type="journal article" date="2003" name="Dev. Biol.">
        <title>A novel developmental mechanism in Dictyostelium revealed in a screen for communication mutants.</title>
        <authorList>
            <person name="Kibler K."/>
            <person name="Nguyen T.-L."/>
            <person name="Svetz J."/>
            <person name="Van Driessche N."/>
            <person name="Ibarra M."/>
            <person name="Thompson C."/>
            <person name="Shaw C."/>
            <person name="Shaulsky G."/>
        </authorList>
    </citation>
    <scope>NUCLEOTIDE SEQUENCE [GENOMIC DNA] OF 252-354</scope>
    <scope>DISRUPTION PHENOTYPE</scope>
</reference>
<feature type="signal peptide" evidence="1">
    <location>
        <begin position="1"/>
        <end position="28"/>
    </location>
</feature>
<feature type="chain" id="PRO_0000393589" description="Communication mutant protein F">
    <location>
        <begin position="29"/>
        <end position="1106"/>
    </location>
</feature>
<feature type="domain" description="G8" evidence="2">
    <location>
        <begin position="254"/>
        <end position="380"/>
    </location>
</feature>
<feature type="glycosylation site" description="N-linked (GlcNAc...) asparagine" evidence="1">
    <location>
        <position position="267"/>
    </location>
</feature>
<feature type="glycosylation site" description="N-linked (GlcNAc...) asparagine" evidence="1">
    <location>
        <position position="306"/>
    </location>
</feature>
<feature type="glycosylation site" description="N-linked (GlcNAc...) asparagine" evidence="1">
    <location>
        <position position="512"/>
    </location>
</feature>
<feature type="glycosylation site" description="N-linked (GlcNAc...) asparagine" evidence="1">
    <location>
        <position position="536"/>
    </location>
</feature>
<feature type="glycosylation site" description="N-linked (GlcNAc...) asparagine" evidence="1">
    <location>
        <position position="677"/>
    </location>
</feature>
<feature type="glycosylation site" description="N-linked (GlcNAc...) asparagine" evidence="1">
    <location>
        <position position="715"/>
    </location>
</feature>
<feature type="glycosylation site" description="N-linked (GlcNAc...) asparagine" evidence="1">
    <location>
        <position position="833"/>
    </location>
</feature>
<keyword id="KW-0325">Glycoprotein</keyword>
<keyword id="KW-1185">Reference proteome</keyword>
<keyword id="KW-0964">Secreted</keyword>
<keyword id="KW-0732">Signal</keyword>
<gene>
    <name type="primary">comF-1</name>
    <name type="ORF">DDB_G0273257</name>
</gene>
<gene>
    <name type="primary">comF-2</name>
    <name type="ORF">DDB_G0273669</name>
</gene>